<evidence type="ECO:0000250" key="1">
    <source>
        <dbReference type="UniProtKB" id="Q9Y2M5"/>
    </source>
</evidence>
<evidence type="ECO:0000255" key="2"/>
<evidence type="ECO:0000255" key="3">
    <source>
        <dbReference type="PROSITE-ProRule" id="PRU00037"/>
    </source>
</evidence>
<evidence type="ECO:0000256" key="4">
    <source>
        <dbReference type="SAM" id="MobiDB-lite"/>
    </source>
</evidence>
<evidence type="ECO:0000269" key="5">
    <source>
    </source>
</evidence>
<evidence type="ECO:0000269" key="6">
    <source>
    </source>
</evidence>
<evidence type="ECO:0000305" key="7"/>
<evidence type="ECO:0000312" key="8">
    <source>
        <dbReference type="EMBL" id="AAF49578.1"/>
    </source>
</evidence>
<evidence type="ECO:0000312" key="9">
    <source>
        <dbReference type="EMBL" id="AAQ23590.1"/>
    </source>
</evidence>
<evidence type="ECO:0000312" key="10">
    <source>
        <dbReference type="EMBL" id="BAD06413.1"/>
    </source>
</evidence>
<evidence type="ECO:0000312" key="11">
    <source>
        <dbReference type="FlyBase" id="FBgn0040230"/>
    </source>
</evidence>
<accession>Q9VUU5</accession>
<accession>Q9NGX7</accession>
<gene>
    <name evidence="8 11" type="primary">dbo</name>
    <name type="ORF">CG6224</name>
</gene>
<dbReference type="EMBL" id="AB027612">
    <property type="protein sequence ID" value="BAD06413.1"/>
    <property type="molecule type" value="mRNA"/>
</dbReference>
<dbReference type="EMBL" id="AF237711">
    <property type="protein sequence ID" value="AAF43447.1"/>
    <property type="molecule type" value="mRNA"/>
</dbReference>
<dbReference type="EMBL" id="AE014296">
    <property type="protein sequence ID" value="AAF49578.1"/>
    <property type="molecule type" value="Genomic_DNA"/>
</dbReference>
<dbReference type="EMBL" id="BT010272">
    <property type="protein sequence ID" value="AAQ23590.1"/>
    <property type="molecule type" value="mRNA"/>
</dbReference>
<dbReference type="RefSeq" id="NP_524989.2">
    <property type="nucleotide sequence ID" value="NM_080250.3"/>
</dbReference>
<dbReference type="SMR" id="Q9VUU5"/>
<dbReference type="BioGRID" id="72788">
    <property type="interactions" value="14"/>
</dbReference>
<dbReference type="FunCoup" id="Q9VUU5">
    <property type="interactions" value="1860"/>
</dbReference>
<dbReference type="IntAct" id="Q9VUU5">
    <property type="interactions" value="8"/>
</dbReference>
<dbReference type="STRING" id="7227.FBpp0075260"/>
<dbReference type="iPTMnet" id="Q9VUU5"/>
<dbReference type="PaxDb" id="7227-FBpp0075260"/>
<dbReference type="DNASU" id="53556"/>
<dbReference type="EnsemblMetazoa" id="FBtr0075505">
    <property type="protein sequence ID" value="FBpp0075260"/>
    <property type="gene ID" value="FBgn0040230"/>
</dbReference>
<dbReference type="GeneID" id="53556"/>
<dbReference type="KEGG" id="dme:Dmel_CG6224"/>
<dbReference type="UCSC" id="CG6224-RA">
    <property type="organism name" value="d. melanogaster"/>
</dbReference>
<dbReference type="AGR" id="FB:FBgn0040230"/>
<dbReference type="CTD" id="53556"/>
<dbReference type="FlyBase" id="FBgn0040230">
    <property type="gene designation" value="dbo"/>
</dbReference>
<dbReference type="VEuPathDB" id="VectorBase:FBgn0040230"/>
<dbReference type="eggNOG" id="KOG4441">
    <property type="taxonomic scope" value="Eukaryota"/>
</dbReference>
<dbReference type="GeneTree" id="ENSGT00940000155161"/>
<dbReference type="HOGENOM" id="CLU_004253_14_2_1"/>
<dbReference type="InParanoid" id="Q9VUU5"/>
<dbReference type="OMA" id="CAVFNNL"/>
<dbReference type="OrthoDB" id="45365at2759"/>
<dbReference type="PhylomeDB" id="Q9VUU5"/>
<dbReference type="Reactome" id="R-DME-8951664">
    <property type="pathway name" value="Neddylation"/>
</dbReference>
<dbReference type="Reactome" id="R-DME-983168">
    <property type="pathway name" value="Antigen processing: Ubiquitination &amp; Proteasome degradation"/>
</dbReference>
<dbReference type="SignaLink" id="Q9VUU5"/>
<dbReference type="UniPathway" id="UPA00143"/>
<dbReference type="BioGRID-ORCS" id="53556">
    <property type="hits" value="1 hit in 1 CRISPR screen"/>
</dbReference>
<dbReference type="GenomeRNAi" id="53556"/>
<dbReference type="PRO" id="PR:Q9VUU5"/>
<dbReference type="Proteomes" id="UP000000803">
    <property type="component" value="Chromosome 3L"/>
</dbReference>
<dbReference type="Bgee" id="FBgn0040230">
    <property type="expression patterns" value="Expressed in wing disc and 239 other cell types or tissues"/>
</dbReference>
<dbReference type="ExpressionAtlas" id="Q9VUU5">
    <property type="expression patterns" value="baseline and differential"/>
</dbReference>
<dbReference type="GO" id="GO:0031463">
    <property type="term" value="C:Cul3-RING ubiquitin ligase complex"/>
    <property type="evidence" value="ECO:0000314"/>
    <property type="project" value="FlyBase"/>
</dbReference>
<dbReference type="GO" id="GO:0005737">
    <property type="term" value="C:cytoplasm"/>
    <property type="evidence" value="ECO:0000318"/>
    <property type="project" value="GO_Central"/>
</dbReference>
<dbReference type="GO" id="GO:0003779">
    <property type="term" value="F:actin binding"/>
    <property type="evidence" value="ECO:0007669"/>
    <property type="project" value="UniProtKB-KW"/>
</dbReference>
<dbReference type="GO" id="GO:1990756">
    <property type="term" value="F:ubiquitin-like ligase-substrate adaptor activity"/>
    <property type="evidence" value="ECO:0000314"/>
    <property type="project" value="FlyBase"/>
</dbReference>
<dbReference type="GO" id="GO:0045886">
    <property type="term" value="P:negative regulation of synaptic assembly at neuromuscular junction"/>
    <property type="evidence" value="ECO:0000315"/>
    <property type="project" value="UniProtKB"/>
</dbReference>
<dbReference type="GO" id="GO:0043161">
    <property type="term" value="P:proteasome-mediated ubiquitin-dependent protein catabolic process"/>
    <property type="evidence" value="ECO:0000314"/>
    <property type="project" value="FlyBase"/>
</dbReference>
<dbReference type="GO" id="GO:0016567">
    <property type="term" value="P:protein ubiquitination"/>
    <property type="evidence" value="ECO:0007669"/>
    <property type="project" value="UniProtKB-UniPathway"/>
</dbReference>
<dbReference type="CDD" id="cd18459">
    <property type="entry name" value="BACK_KLHL20"/>
    <property type="match status" value="1"/>
</dbReference>
<dbReference type="CDD" id="cd18249">
    <property type="entry name" value="BTB_POZ_KLHL20_KLEIP"/>
    <property type="match status" value="1"/>
</dbReference>
<dbReference type="FunFam" id="1.25.40.420:FF:000001">
    <property type="entry name" value="Kelch-like family member 12"/>
    <property type="match status" value="1"/>
</dbReference>
<dbReference type="FunFam" id="2.120.10.80:FF:000006">
    <property type="entry name" value="Kelch-like family member 20"/>
    <property type="match status" value="1"/>
</dbReference>
<dbReference type="FunFam" id="3.30.710.10:FF:000001">
    <property type="entry name" value="Kelch-like family member 20"/>
    <property type="match status" value="1"/>
</dbReference>
<dbReference type="Gene3D" id="1.25.40.420">
    <property type="match status" value="1"/>
</dbReference>
<dbReference type="Gene3D" id="2.120.10.80">
    <property type="entry name" value="Kelch-type beta propeller"/>
    <property type="match status" value="1"/>
</dbReference>
<dbReference type="Gene3D" id="3.30.710.10">
    <property type="entry name" value="Potassium Channel Kv1.1, Chain A"/>
    <property type="match status" value="1"/>
</dbReference>
<dbReference type="InterPro" id="IPR011705">
    <property type="entry name" value="BACK"/>
</dbReference>
<dbReference type="InterPro" id="IPR017096">
    <property type="entry name" value="BTB-kelch_protein"/>
</dbReference>
<dbReference type="InterPro" id="IPR000210">
    <property type="entry name" value="BTB/POZ_dom"/>
</dbReference>
<dbReference type="InterPro" id="IPR011043">
    <property type="entry name" value="Gal_Oxase/kelch_b-propeller"/>
</dbReference>
<dbReference type="InterPro" id="IPR015915">
    <property type="entry name" value="Kelch-typ_b-propeller"/>
</dbReference>
<dbReference type="InterPro" id="IPR006652">
    <property type="entry name" value="Kelch_1"/>
</dbReference>
<dbReference type="InterPro" id="IPR011333">
    <property type="entry name" value="SKP1/BTB/POZ_sf"/>
</dbReference>
<dbReference type="PANTHER" id="PTHR24412">
    <property type="entry name" value="KELCH PROTEIN"/>
    <property type="match status" value="1"/>
</dbReference>
<dbReference type="PANTHER" id="PTHR24412:SF451">
    <property type="entry name" value="KELCH-LIKE PROTEIN 20"/>
    <property type="match status" value="1"/>
</dbReference>
<dbReference type="Pfam" id="PF07707">
    <property type="entry name" value="BACK"/>
    <property type="match status" value="1"/>
</dbReference>
<dbReference type="Pfam" id="PF00651">
    <property type="entry name" value="BTB"/>
    <property type="match status" value="1"/>
</dbReference>
<dbReference type="Pfam" id="PF01344">
    <property type="entry name" value="Kelch_1"/>
    <property type="match status" value="1"/>
</dbReference>
<dbReference type="Pfam" id="PF24681">
    <property type="entry name" value="Kelch_KLHDC2_KLHL20_DRC7"/>
    <property type="match status" value="1"/>
</dbReference>
<dbReference type="PIRSF" id="PIRSF037037">
    <property type="entry name" value="Kelch-like_protein_gigaxonin"/>
    <property type="match status" value="1"/>
</dbReference>
<dbReference type="SMART" id="SM00875">
    <property type="entry name" value="BACK"/>
    <property type="match status" value="1"/>
</dbReference>
<dbReference type="SMART" id="SM00225">
    <property type="entry name" value="BTB"/>
    <property type="match status" value="1"/>
</dbReference>
<dbReference type="SMART" id="SM00612">
    <property type="entry name" value="Kelch"/>
    <property type="match status" value="6"/>
</dbReference>
<dbReference type="SUPFAM" id="SSF50965">
    <property type="entry name" value="Galactose oxidase, central domain"/>
    <property type="match status" value="1"/>
</dbReference>
<dbReference type="SUPFAM" id="SSF117281">
    <property type="entry name" value="Kelch motif"/>
    <property type="match status" value="1"/>
</dbReference>
<dbReference type="SUPFAM" id="SSF54695">
    <property type="entry name" value="POZ domain"/>
    <property type="match status" value="1"/>
</dbReference>
<dbReference type="PROSITE" id="PS50097">
    <property type="entry name" value="BTB"/>
    <property type="match status" value="1"/>
</dbReference>
<keyword id="KW-0009">Actin-binding</keyword>
<keyword id="KW-0880">Kelch repeat</keyword>
<keyword id="KW-0597">Phosphoprotein</keyword>
<keyword id="KW-1185">Reference proteome</keyword>
<keyword id="KW-0677">Repeat</keyword>
<keyword id="KW-0833">Ubl conjugation pathway</keyword>
<feature type="chain" id="PRO_0000379948" description="Kelch-like protein diablo">
    <location>
        <begin position="1"/>
        <end position="623"/>
    </location>
</feature>
<feature type="domain" description="BTB" evidence="3">
    <location>
        <begin position="72"/>
        <end position="139"/>
    </location>
</feature>
<feature type="domain" description="BACK" evidence="2">
    <location>
        <begin position="174"/>
        <end position="276"/>
    </location>
</feature>
<feature type="repeat" description="Kelch 1" evidence="2">
    <location>
        <begin position="323"/>
        <end position="369"/>
    </location>
</feature>
<feature type="repeat" description="Kelch 2" evidence="2">
    <location>
        <begin position="371"/>
        <end position="417"/>
    </location>
</feature>
<feature type="repeat" description="Kelch 3" evidence="2">
    <location>
        <begin position="418"/>
        <end position="464"/>
    </location>
</feature>
<feature type="repeat" description="Kelch 4" evidence="2">
    <location>
        <begin position="466"/>
        <end position="511"/>
    </location>
</feature>
<feature type="repeat" description="Kelch 5" evidence="2">
    <location>
        <begin position="513"/>
        <end position="558"/>
    </location>
</feature>
<feature type="repeat" description="Kelch 6" evidence="2">
    <location>
        <begin position="559"/>
        <end position="605"/>
    </location>
</feature>
<feature type="region of interest" description="Disordered" evidence="4">
    <location>
        <begin position="1"/>
        <end position="54"/>
    </location>
</feature>
<feature type="compositionally biased region" description="Gly residues" evidence="4">
    <location>
        <begin position="20"/>
        <end position="32"/>
    </location>
</feature>
<feature type="modified residue" description="Phosphothreonine" evidence="6">
    <location>
        <position position="19"/>
    </location>
</feature>
<feature type="sequence conflict" description="In Ref. 2; AAF43447." evidence="7" ref="2">
    <original>A</original>
    <variation>V</variation>
    <location>
        <position position="286"/>
    </location>
</feature>
<sequence>MGDLPGSGSTAQPRDAAVTGTGGNSTAGGGSSVGSTAVDRPPSPARLSHTSEKHPKVTLTELNMLRRHRELCDVVLNVGGRKIFAHRVILSACSSYFCAMFTGELEESRQTEVTIRDIDENAMELLIDFCYTAHIIVEESNVQTLLPAACLLQLVEIQDICCEFLKRQLDPTNCLGIRAFADTHSCRELLRIADKFTQHNFQEVMESEEFLLLPVGQLVDIICSDELNVRSEEQVFNAVMSWLKYNVAERRQHLAQVLQHVRLPLLSPKFLVGTVGSDLLVRSDEACRDLVDEAKNYLLLPQERPLMQGPRTRPRKPTRRGEVLFAVGGWCSGDAIASVERFDPQTNDWKMVAPMSKRRCGVGVAVLNDLLYAVGGHDGQSYLNSIERYDPQTNQWSCDVAPTTSCRTSVGVAVLDGFLYAVGGQDGVQCLNHVERYDPKENKWSKVAPMTTRRLGVAVAVLGGFLYAIGGSDGQCPLNTVERYDPRHNKWVAVSPMSTRRKHLGCAVFNNYIYAVGGRDDCMELSSAERYNPLTNTWSPIVAMTSRRSGVGLAVVNGQLYAVGGFDGSAYLKTIEVYDPETNQWRLCGCMNYRRLGGGVGVMRAPQTENYMWCENSFKQPNS</sequence>
<comment type="function">
    <text evidence="1 5">Probable substrate-specific adapter of an E3 ubiquitin-protein ligase complex which mediates the ubiquitination and subsequent proteasomal degradation of target proteins (By similarity). May have a role in synapse differentiation and growth.</text>
</comment>
<comment type="pathway">
    <text evidence="1">Protein modification; protein ubiquitination.</text>
</comment>
<comment type="disruption phenotype">
    <text evidence="5">Defects in synapse differentiation and growth; undergrowth resulting in reduced numbers of boutons and/or branches.</text>
</comment>
<proteinExistence type="evidence at protein level"/>
<protein>
    <recommendedName>
        <fullName evidence="10">Kelch-like protein diablo</fullName>
    </recommendedName>
</protein>
<reference evidence="10" key="1">
    <citation type="submission" date="1999-05" db="EMBL/GenBank/DDBJ databases">
        <title>Drosophila kelch-like protein.</title>
        <authorList>
            <person name="Yamashita A."/>
            <person name="Togashi S."/>
        </authorList>
    </citation>
    <scope>NUCLEOTIDE SEQUENCE [MRNA]</scope>
</reference>
<reference evidence="10" key="2">
    <citation type="submission" date="2000-02" db="EMBL/GenBank/DDBJ databases">
        <title>Identification of Diablo, a new Drosophila melanogaster Kelch family protein.</title>
        <authorList>
            <person name="Stuart B.D."/>
            <person name="Wasserman S.A."/>
        </authorList>
    </citation>
    <scope>NUCLEOTIDE SEQUENCE [MRNA]</scope>
</reference>
<reference evidence="8" key="3">
    <citation type="journal article" date="2000" name="Science">
        <title>The genome sequence of Drosophila melanogaster.</title>
        <authorList>
            <person name="Adams M.D."/>
            <person name="Celniker S.E."/>
            <person name="Holt R.A."/>
            <person name="Evans C.A."/>
            <person name="Gocayne J.D."/>
            <person name="Amanatides P.G."/>
            <person name="Scherer S.E."/>
            <person name="Li P.W."/>
            <person name="Hoskins R.A."/>
            <person name="Galle R.F."/>
            <person name="George R.A."/>
            <person name="Lewis S.E."/>
            <person name="Richards S."/>
            <person name="Ashburner M."/>
            <person name="Henderson S.N."/>
            <person name="Sutton G.G."/>
            <person name="Wortman J.R."/>
            <person name="Yandell M.D."/>
            <person name="Zhang Q."/>
            <person name="Chen L.X."/>
            <person name="Brandon R.C."/>
            <person name="Rogers Y.-H.C."/>
            <person name="Blazej R.G."/>
            <person name="Champe M."/>
            <person name="Pfeiffer B.D."/>
            <person name="Wan K.H."/>
            <person name="Doyle C."/>
            <person name="Baxter E.G."/>
            <person name="Helt G."/>
            <person name="Nelson C.R."/>
            <person name="Miklos G.L.G."/>
            <person name="Abril J.F."/>
            <person name="Agbayani A."/>
            <person name="An H.-J."/>
            <person name="Andrews-Pfannkoch C."/>
            <person name="Baldwin D."/>
            <person name="Ballew R.M."/>
            <person name="Basu A."/>
            <person name="Baxendale J."/>
            <person name="Bayraktaroglu L."/>
            <person name="Beasley E.M."/>
            <person name="Beeson K.Y."/>
            <person name="Benos P.V."/>
            <person name="Berman B.P."/>
            <person name="Bhandari D."/>
            <person name="Bolshakov S."/>
            <person name="Borkova D."/>
            <person name="Botchan M.R."/>
            <person name="Bouck J."/>
            <person name="Brokstein P."/>
            <person name="Brottier P."/>
            <person name="Burtis K.C."/>
            <person name="Busam D.A."/>
            <person name="Butler H."/>
            <person name="Cadieu E."/>
            <person name="Center A."/>
            <person name="Chandra I."/>
            <person name="Cherry J.M."/>
            <person name="Cawley S."/>
            <person name="Dahlke C."/>
            <person name="Davenport L.B."/>
            <person name="Davies P."/>
            <person name="de Pablos B."/>
            <person name="Delcher A."/>
            <person name="Deng Z."/>
            <person name="Mays A.D."/>
            <person name="Dew I."/>
            <person name="Dietz S.M."/>
            <person name="Dodson K."/>
            <person name="Doup L.E."/>
            <person name="Downes M."/>
            <person name="Dugan-Rocha S."/>
            <person name="Dunkov B.C."/>
            <person name="Dunn P."/>
            <person name="Durbin K.J."/>
            <person name="Evangelista C.C."/>
            <person name="Ferraz C."/>
            <person name="Ferriera S."/>
            <person name="Fleischmann W."/>
            <person name="Fosler C."/>
            <person name="Gabrielian A.E."/>
            <person name="Garg N.S."/>
            <person name="Gelbart W.M."/>
            <person name="Glasser K."/>
            <person name="Glodek A."/>
            <person name="Gong F."/>
            <person name="Gorrell J.H."/>
            <person name="Gu Z."/>
            <person name="Guan P."/>
            <person name="Harris M."/>
            <person name="Harris N.L."/>
            <person name="Harvey D.A."/>
            <person name="Heiman T.J."/>
            <person name="Hernandez J.R."/>
            <person name="Houck J."/>
            <person name="Hostin D."/>
            <person name="Houston K.A."/>
            <person name="Howland T.J."/>
            <person name="Wei M.-H."/>
            <person name="Ibegwam C."/>
            <person name="Jalali M."/>
            <person name="Kalush F."/>
            <person name="Karpen G.H."/>
            <person name="Ke Z."/>
            <person name="Kennison J.A."/>
            <person name="Ketchum K.A."/>
            <person name="Kimmel B.E."/>
            <person name="Kodira C.D."/>
            <person name="Kraft C.L."/>
            <person name="Kravitz S."/>
            <person name="Kulp D."/>
            <person name="Lai Z."/>
            <person name="Lasko P."/>
            <person name="Lei Y."/>
            <person name="Levitsky A.A."/>
            <person name="Li J.H."/>
            <person name="Li Z."/>
            <person name="Liang Y."/>
            <person name="Lin X."/>
            <person name="Liu X."/>
            <person name="Mattei B."/>
            <person name="McIntosh T.C."/>
            <person name="McLeod M.P."/>
            <person name="McPherson D."/>
            <person name="Merkulov G."/>
            <person name="Milshina N.V."/>
            <person name="Mobarry C."/>
            <person name="Morris J."/>
            <person name="Moshrefi A."/>
            <person name="Mount S.M."/>
            <person name="Moy M."/>
            <person name="Murphy B."/>
            <person name="Murphy L."/>
            <person name="Muzny D.M."/>
            <person name="Nelson D.L."/>
            <person name="Nelson D.R."/>
            <person name="Nelson K.A."/>
            <person name="Nixon K."/>
            <person name="Nusskern D.R."/>
            <person name="Pacleb J.M."/>
            <person name="Palazzolo M."/>
            <person name="Pittman G.S."/>
            <person name="Pan S."/>
            <person name="Pollard J."/>
            <person name="Puri V."/>
            <person name="Reese M.G."/>
            <person name="Reinert K."/>
            <person name="Remington K."/>
            <person name="Saunders R.D.C."/>
            <person name="Scheeler F."/>
            <person name="Shen H."/>
            <person name="Shue B.C."/>
            <person name="Siden-Kiamos I."/>
            <person name="Simpson M."/>
            <person name="Skupski M.P."/>
            <person name="Smith T.J."/>
            <person name="Spier E."/>
            <person name="Spradling A.C."/>
            <person name="Stapleton M."/>
            <person name="Strong R."/>
            <person name="Sun E."/>
            <person name="Svirskas R."/>
            <person name="Tector C."/>
            <person name="Turner R."/>
            <person name="Venter E."/>
            <person name="Wang A.H."/>
            <person name="Wang X."/>
            <person name="Wang Z.-Y."/>
            <person name="Wassarman D.A."/>
            <person name="Weinstock G.M."/>
            <person name="Weissenbach J."/>
            <person name="Williams S.M."/>
            <person name="Woodage T."/>
            <person name="Worley K.C."/>
            <person name="Wu D."/>
            <person name="Yang S."/>
            <person name="Yao Q.A."/>
            <person name="Ye J."/>
            <person name="Yeh R.-F."/>
            <person name="Zaveri J.S."/>
            <person name="Zhan M."/>
            <person name="Zhang G."/>
            <person name="Zhao Q."/>
            <person name="Zheng L."/>
            <person name="Zheng X.H."/>
            <person name="Zhong F.N."/>
            <person name="Zhong W."/>
            <person name="Zhou X."/>
            <person name="Zhu S.C."/>
            <person name="Zhu X."/>
            <person name="Smith H.O."/>
            <person name="Gibbs R.A."/>
            <person name="Myers E.W."/>
            <person name="Rubin G.M."/>
            <person name="Venter J.C."/>
        </authorList>
    </citation>
    <scope>NUCLEOTIDE SEQUENCE [LARGE SCALE GENOMIC DNA]</scope>
    <source>
        <strain>Berkeley</strain>
    </source>
</reference>
<reference evidence="7 8" key="4">
    <citation type="journal article" date="2002" name="Genome Biol.">
        <title>Annotation of the Drosophila melanogaster euchromatic genome: a systematic review.</title>
        <authorList>
            <person name="Misra S."/>
            <person name="Crosby M.A."/>
            <person name="Mungall C.J."/>
            <person name="Matthews B.B."/>
            <person name="Campbell K.S."/>
            <person name="Hradecky P."/>
            <person name="Huang Y."/>
            <person name="Kaminker J.S."/>
            <person name="Millburn G.H."/>
            <person name="Prochnik S.E."/>
            <person name="Smith C.D."/>
            <person name="Tupy J.L."/>
            <person name="Whitfield E.J."/>
            <person name="Bayraktaroglu L."/>
            <person name="Berman B.P."/>
            <person name="Bettencourt B.R."/>
            <person name="Celniker S.E."/>
            <person name="de Grey A.D.N.J."/>
            <person name="Drysdale R.A."/>
            <person name="Harris N.L."/>
            <person name="Richter J."/>
            <person name="Russo S."/>
            <person name="Schroeder A.J."/>
            <person name="Shu S.Q."/>
            <person name="Stapleton M."/>
            <person name="Yamada C."/>
            <person name="Ashburner M."/>
            <person name="Gelbart W.M."/>
            <person name="Rubin G.M."/>
            <person name="Lewis S.E."/>
        </authorList>
    </citation>
    <scope>GENOME REANNOTATION</scope>
    <source>
        <strain>Berkeley</strain>
    </source>
</reference>
<reference evidence="10" key="5">
    <citation type="submission" date="2003-08" db="EMBL/GenBank/DDBJ databases">
        <authorList>
            <person name="Stapleton M."/>
            <person name="Brokstein P."/>
            <person name="Hong L."/>
            <person name="Agbayani A."/>
            <person name="Carlson J.W."/>
            <person name="Champe M."/>
            <person name="Chavez C."/>
            <person name="Dorsett V."/>
            <person name="Dresnek D."/>
            <person name="Farfan D."/>
            <person name="Frise E."/>
            <person name="George R.A."/>
            <person name="Gonzalez M."/>
            <person name="Guarin H."/>
            <person name="Kronmiller B."/>
            <person name="Li P.W."/>
            <person name="Liao G."/>
            <person name="Miranda A."/>
            <person name="Mungall C.J."/>
            <person name="Nunoo J."/>
            <person name="Pacleb J.M."/>
            <person name="Paragas V."/>
            <person name="Park S."/>
            <person name="Patel S."/>
            <person name="Phouanenavong S."/>
            <person name="Wan K.H."/>
            <person name="Yu C."/>
            <person name="Lewis S.E."/>
            <person name="Rubin G.M."/>
            <person name="Celniker S.E."/>
        </authorList>
    </citation>
    <scope>NUCLEOTIDE SEQUENCE [LARGE SCALE MRNA]</scope>
    <source>
        <strain evidence="9">Berkeley</strain>
        <tissue>Embryo</tissue>
    </source>
</reference>
<reference evidence="7" key="6">
    <citation type="journal article" date="2006" name="J. Neurobiol.">
        <title>Genome-wide P-element screen for Drosophila synaptogenesis mutants.</title>
        <authorList>
            <person name="Liebl F.L.W."/>
            <person name="Werner K.M."/>
            <person name="Sheng Q."/>
            <person name="Karr J.E."/>
            <person name="McCabe B.D."/>
            <person name="Featherstone D.E."/>
        </authorList>
    </citation>
    <scope>FUNCTION</scope>
    <scope>DISRUPTION PHENOTYPE</scope>
</reference>
<reference evidence="7" key="7">
    <citation type="journal article" date="2008" name="J. Proteome Res.">
        <title>Phosphoproteome analysis of Drosophila melanogaster embryos.</title>
        <authorList>
            <person name="Zhai B."/>
            <person name="Villen J."/>
            <person name="Beausoleil S.A."/>
            <person name="Mintseris J."/>
            <person name="Gygi S.P."/>
        </authorList>
    </citation>
    <scope>PHOSPHORYLATION [LARGE SCALE ANALYSIS] AT THR-19</scope>
    <scope>IDENTIFICATION BY MASS SPECTROMETRY</scope>
    <source>
        <tissue evidence="6">Embryo</tissue>
    </source>
</reference>
<organism>
    <name type="scientific">Drosophila melanogaster</name>
    <name type="common">Fruit fly</name>
    <dbReference type="NCBI Taxonomy" id="7227"/>
    <lineage>
        <taxon>Eukaryota</taxon>
        <taxon>Metazoa</taxon>
        <taxon>Ecdysozoa</taxon>
        <taxon>Arthropoda</taxon>
        <taxon>Hexapoda</taxon>
        <taxon>Insecta</taxon>
        <taxon>Pterygota</taxon>
        <taxon>Neoptera</taxon>
        <taxon>Endopterygota</taxon>
        <taxon>Diptera</taxon>
        <taxon>Brachycera</taxon>
        <taxon>Muscomorpha</taxon>
        <taxon>Ephydroidea</taxon>
        <taxon>Drosophilidae</taxon>
        <taxon>Drosophila</taxon>
        <taxon>Sophophora</taxon>
    </lineage>
</organism>
<name>KLHDB_DROME</name>